<name>Y3645_PSESM</name>
<proteinExistence type="inferred from homology"/>
<feature type="chain" id="PRO_0000170425" description="Nucleoid-associated protein PSPTO_3645">
    <location>
        <begin position="1"/>
        <end position="108"/>
    </location>
</feature>
<feature type="region of interest" description="Disordered" evidence="2">
    <location>
        <begin position="85"/>
        <end position="108"/>
    </location>
</feature>
<feature type="compositionally biased region" description="Polar residues" evidence="2">
    <location>
        <begin position="85"/>
        <end position="96"/>
    </location>
</feature>
<sequence length="108" mass="11681">MMKGGMAGLMKQAQQMQEKMAKMQEELANAEVTGQSGAGLVSVVMTGRHDVKRINLDDSLMQEDKEVLEDLIAAAVNDAVRKIEQASQDKTASMTAGMQLPPGMKLPF</sequence>
<keyword id="KW-0963">Cytoplasm</keyword>
<keyword id="KW-0238">DNA-binding</keyword>
<keyword id="KW-1185">Reference proteome</keyword>
<accession>Q87YZ4</accession>
<evidence type="ECO:0000255" key="1">
    <source>
        <dbReference type="HAMAP-Rule" id="MF_00274"/>
    </source>
</evidence>
<evidence type="ECO:0000256" key="2">
    <source>
        <dbReference type="SAM" id="MobiDB-lite"/>
    </source>
</evidence>
<dbReference type="EMBL" id="AE016853">
    <property type="protein sequence ID" value="AAO57115.1"/>
    <property type="molecule type" value="Genomic_DNA"/>
</dbReference>
<dbReference type="RefSeq" id="NP_793420.1">
    <property type="nucleotide sequence ID" value="NC_004578.1"/>
</dbReference>
<dbReference type="RefSeq" id="WP_002552818.1">
    <property type="nucleotide sequence ID" value="NC_004578.1"/>
</dbReference>
<dbReference type="SMR" id="Q87YZ4"/>
<dbReference type="STRING" id="223283.PSPTO_3645"/>
<dbReference type="KEGG" id="pst:PSPTO_3645"/>
<dbReference type="PATRIC" id="fig|223283.9.peg.3734"/>
<dbReference type="eggNOG" id="COG0718">
    <property type="taxonomic scope" value="Bacteria"/>
</dbReference>
<dbReference type="HOGENOM" id="CLU_140930_0_0_6"/>
<dbReference type="OrthoDB" id="9808738at2"/>
<dbReference type="PhylomeDB" id="Q87YZ4"/>
<dbReference type="Proteomes" id="UP000002515">
    <property type="component" value="Chromosome"/>
</dbReference>
<dbReference type="GO" id="GO:0043590">
    <property type="term" value="C:bacterial nucleoid"/>
    <property type="evidence" value="ECO:0007669"/>
    <property type="project" value="UniProtKB-UniRule"/>
</dbReference>
<dbReference type="GO" id="GO:0005829">
    <property type="term" value="C:cytosol"/>
    <property type="evidence" value="ECO:0007669"/>
    <property type="project" value="TreeGrafter"/>
</dbReference>
<dbReference type="GO" id="GO:0003677">
    <property type="term" value="F:DNA binding"/>
    <property type="evidence" value="ECO:0007669"/>
    <property type="project" value="UniProtKB-UniRule"/>
</dbReference>
<dbReference type="FunFam" id="3.30.1310.10:FF:000001">
    <property type="entry name" value="Nucleoid-associated protein YbaB"/>
    <property type="match status" value="1"/>
</dbReference>
<dbReference type="Gene3D" id="3.30.1310.10">
    <property type="entry name" value="Nucleoid-associated protein YbaB-like domain"/>
    <property type="match status" value="1"/>
</dbReference>
<dbReference type="HAMAP" id="MF_00274">
    <property type="entry name" value="DNA_YbaB_EbfC"/>
    <property type="match status" value="1"/>
</dbReference>
<dbReference type="InterPro" id="IPR036894">
    <property type="entry name" value="YbaB-like_sf"/>
</dbReference>
<dbReference type="InterPro" id="IPR004401">
    <property type="entry name" value="YbaB/EbfC"/>
</dbReference>
<dbReference type="NCBIfam" id="TIGR00103">
    <property type="entry name" value="DNA_YbaB_EbfC"/>
    <property type="match status" value="1"/>
</dbReference>
<dbReference type="PANTHER" id="PTHR33449">
    <property type="entry name" value="NUCLEOID-ASSOCIATED PROTEIN YBAB"/>
    <property type="match status" value="1"/>
</dbReference>
<dbReference type="PANTHER" id="PTHR33449:SF1">
    <property type="entry name" value="NUCLEOID-ASSOCIATED PROTEIN YBAB"/>
    <property type="match status" value="1"/>
</dbReference>
<dbReference type="Pfam" id="PF02575">
    <property type="entry name" value="YbaB_DNA_bd"/>
    <property type="match status" value="1"/>
</dbReference>
<dbReference type="PIRSF" id="PIRSF004555">
    <property type="entry name" value="UCP004555"/>
    <property type="match status" value="1"/>
</dbReference>
<dbReference type="SUPFAM" id="SSF82607">
    <property type="entry name" value="YbaB-like"/>
    <property type="match status" value="1"/>
</dbReference>
<reference key="1">
    <citation type="journal article" date="2003" name="Proc. Natl. Acad. Sci. U.S.A.">
        <title>The complete genome sequence of the Arabidopsis and tomato pathogen Pseudomonas syringae pv. tomato DC3000.</title>
        <authorList>
            <person name="Buell C.R."/>
            <person name="Joardar V."/>
            <person name="Lindeberg M."/>
            <person name="Selengut J."/>
            <person name="Paulsen I.T."/>
            <person name="Gwinn M.L."/>
            <person name="Dodson R.J."/>
            <person name="DeBoy R.T."/>
            <person name="Durkin A.S."/>
            <person name="Kolonay J.F."/>
            <person name="Madupu R."/>
            <person name="Daugherty S.C."/>
            <person name="Brinkac L.M."/>
            <person name="Beanan M.J."/>
            <person name="Haft D.H."/>
            <person name="Nelson W.C."/>
            <person name="Davidsen T.M."/>
            <person name="Zafar N."/>
            <person name="Zhou L."/>
            <person name="Liu J."/>
            <person name="Yuan Q."/>
            <person name="Khouri H.M."/>
            <person name="Fedorova N.B."/>
            <person name="Tran B."/>
            <person name="Russell D."/>
            <person name="Berry K.J."/>
            <person name="Utterback T.R."/>
            <person name="Van Aken S.E."/>
            <person name="Feldblyum T.V."/>
            <person name="D'Ascenzo M."/>
            <person name="Deng W.-L."/>
            <person name="Ramos A.R."/>
            <person name="Alfano J.R."/>
            <person name="Cartinhour S."/>
            <person name="Chatterjee A.K."/>
            <person name="Delaney T.P."/>
            <person name="Lazarowitz S.G."/>
            <person name="Martin G.B."/>
            <person name="Schneider D.J."/>
            <person name="Tang X."/>
            <person name="Bender C.L."/>
            <person name="White O."/>
            <person name="Fraser C.M."/>
            <person name="Collmer A."/>
        </authorList>
    </citation>
    <scope>NUCLEOTIDE SEQUENCE [LARGE SCALE GENOMIC DNA]</scope>
    <source>
        <strain>ATCC BAA-871 / DC3000</strain>
    </source>
</reference>
<comment type="function">
    <text evidence="1">Binds to DNA and alters its conformation. May be involved in regulation of gene expression, nucleoid organization and DNA protection.</text>
</comment>
<comment type="subunit">
    <text evidence="1">Homodimer.</text>
</comment>
<comment type="subcellular location">
    <subcellularLocation>
        <location evidence="1">Cytoplasm</location>
        <location evidence="1">Nucleoid</location>
    </subcellularLocation>
</comment>
<comment type="similarity">
    <text evidence="1">Belongs to the YbaB/EbfC family.</text>
</comment>
<gene>
    <name type="ordered locus">PSPTO_3645</name>
</gene>
<protein>
    <recommendedName>
        <fullName evidence="1">Nucleoid-associated protein PSPTO_3645</fullName>
    </recommendedName>
</protein>
<organism>
    <name type="scientific">Pseudomonas syringae pv. tomato (strain ATCC BAA-871 / DC3000)</name>
    <dbReference type="NCBI Taxonomy" id="223283"/>
    <lineage>
        <taxon>Bacteria</taxon>
        <taxon>Pseudomonadati</taxon>
        <taxon>Pseudomonadota</taxon>
        <taxon>Gammaproteobacteria</taxon>
        <taxon>Pseudomonadales</taxon>
        <taxon>Pseudomonadaceae</taxon>
        <taxon>Pseudomonas</taxon>
    </lineage>
</organism>